<sequence length="313" mass="35844">MVRGDDQLNGLQGGKRALDILCVATERTVSAFAYEEIGETSTEGDKRRERLRRLRRLINYSLSTTMNSSLSKRLKIDECKNQDPEQNPNRVASSPSSCHLESKRPQKVVSNKPVRNRKPVIVTDEDRTPTEWLIDVMREVNGMDAKLIFVKVLPNSDVDELQTRLMMPWKQILDMDFLNEEELEKIDRHHKKISASDKGADVIVVNSKGLQRKLKLKRWDMTSTSNYVLGLGWNKVVTDNILQRGTRLRIWSFHSPDMLFFAFVLSDPDPAPTECLNLLAKLCEETTCLEALQEANRMSSLVSDTELDLELRL</sequence>
<name>Y2172_ARATH</name>
<organism>
    <name type="scientific">Arabidopsis thaliana</name>
    <name type="common">Mouse-ear cress</name>
    <dbReference type="NCBI Taxonomy" id="3702"/>
    <lineage>
        <taxon>Eukaryota</taxon>
        <taxon>Viridiplantae</taxon>
        <taxon>Streptophyta</taxon>
        <taxon>Embryophyta</taxon>
        <taxon>Tracheophyta</taxon>
        <taxon>Spermatophyta</taxon>
        <taxon>Magnoliopsida</taxon>
        <taxon>eudicotyledons</taxon>
        <taxon>Gunneridae</taxon>
        <taxon>Pentapetalae</taxon>
        <taxon>rosids</taxon>
        <taxon>malvids</taxon>
        <taxon>Brassicales</taxon>
        <taxon>Brassicaceae</taxon>
        <taxon>Camelineae</taxon>
        <taxon>Arabidopsis</taxon>
    </lineage>
</organism>
<evidence type="ECO:0000255" key="1">
    <source>
        <dbReference type="PROSITE-ProRule" id="PRU00326"/>
    </source>
</evidence>
<evidence type="ECO:0000256" key="2">
    <source>
        <dbReference type="SAM" id="MobiDB-lite"/>
    </source>
</evidence>
<dbReference type="EMBL" id="AJ441118">
    <property type="protein sequence ID" value="CAD29617.1"/>
    <property type="molecule type" value="mRNA"/>
</dbReference>
<dbReference type="EMBL" id="AC007071">
    <property type="protein sequence ID" value="AAM15380.1"/>
    <property type="molecule type" value="Genomic_DNA"/>
</dbReference>
<dbReference type="EMBL" id="CP002685">
    <property type="protein sequence ID" value="AEC08576.1"/>
    <property type="molecule type" value="Genomic_DNA"/>
</dbReference>
<dbReference type="EMBL" id="BT026082">
    <property type="protein sequence ID" value="ABG48438.1"/>
    <property type="molecule type" value="mRNA"/>
</dbReference>
<dbReference type="EMBL" id="AB493574">
    <property type="protein sequence ID" value="BAH30412.1"/>
    <property type="molecule type" value="Genomic_DNA"/>
</dbReference>
<dbReference type="PIR" id="C84724">
    <property type="entry name" value="C84724"/>
</dbReference>
<dbReference type="RefSeq" id="NP_180730.1">
    <property type="nucleotide sequence ID" value="NM_128729.1"/>
</dbReference>
<dbReference type="BioGRID" id="3075">
    <property type="interactions" value="10"/>
</dbReference>
<dbReference type="IntAct" id="Q8RV83">
    <property type="interactions" value="9"/>
</dbReference>
<dbReference type="PaxDb" id="3702-AT2G31720.1"/>
<dbReference type="EnsemblPlants" id="AT2G31720.1">
    <property type="protein sequence ID" value="AT2G31720.1"/>
    <property type="gene ID" value="AT2G31720"/>
</dbReference>
<dbReference type="GeneID" id="817728"/>
<dbReference type="Gramene" id="AT2G31720.1">
    <property type="protein sequence ID" value="AT2G31720.1"/>
    <property type="gene ID" value="AT2G31720"/>
</dbReference>
<dbReference type="KEGG" id="ath:AT2G31720"/>
<dbReference type="Araport" id="AT2G31720"/>
<dbReference type="TAIR" id="AT2G31720"/>
<dbReference type="HOGENOM" id="CLU_889509_0_0_1"/>
<dbReference type="InParanoid" id="Q8RV83"/>
<dbReference type="OMA" id="CHLESKR"/>
<dbReference type="PhylomeDB" id="Q8RV83"/>
<dbReference type="PRO" id="PR:Q8RV83"/>
<dbReference type="Proteomes" id="UP000006548">
    <property type="component" value="Chromosome 2"/>
</dbReference>
<dbReference type="ExpressionAtlas" id="Q8RV83">
    <property type="expression patterns" value="baseline and differential"/>
</dbReference>
<dbReference type="GO" id="GO:0005634">
    <property type="term" value="C:nucleus"/>
    <property type="evidence" value="ECO:0007669"/>
    <property type="project" value="UniProtKB-SubCell"/>
</dbReference>
<dbReference type="GO" id="GO:0003677">
    <property type="term" value="F:DNA binding"/>
    <property type="evidence" value="ECO:0007669"/>
    <property type="project" value="UniProtKB-KW"/>
</dbReference>
<dbReference type="Gene3D" id="2.40.330.10">
    <property type="entry name" value="DNA-binding pseudobarrel domain"/>
    <property type="match status" value="1"/>
</dbReference>
<dbReference type="InterPro" id="IPR005508">
    <property type="entry name" value="At2g31720-like"/>
</dbReference>
<dbReference type="InterPro" id="IPR003340">
    <property type="entry name" value="B3_DNA-bd"/>
</dbReference>
<dbReference type="InterPro" id="IPR015300">
    <property type="entry name" value="DNA-bd_pseudobarrel_sf"/>
</dbReference>
<dbReference type="PANTHER" id="PTHR31541">
    <property type="entry name" value="B3 DOMAIN PLANT PROTEIN-RELATED"/>
    <property type="match status" value="1"/>
</dbReference>
<dbReference type="PANTHER" id="PTHR31541:SF61">
    <property type="entry name" value="TF-B3 DOMAIN-CONTAINING PROTEIN"/>
    <property type="match status" value="1"/>
</dbReference>
<dbReference type="Pfam" id="PF03754">
    <property type="entry name" value="At2g31720-like"/>
    <property type="match status" value="1"/>
</dbReference>
<dbReference type="SUPFAM" id="SSF101936">
    <property type="entry name" value="DNA-binding pseudobarrel domain"/>
    <property type="match status" value="1"/>
</dbReference>
<dbReference type="PROSITE" id="PS50863">
    <property type="entry name" value="B3"/>
    <property type="match status" value="1"/>
</dbReference>
<accession>Q8RV83</accession>
<feature type="chain" id="PRO_0000375129" description="B3 domain-containing protein At2g31720">
    <location>
        <begin position="1"/>
        <end position="313"/>
    </location>
</feature>
<feature type="DNA-binding region" description="TF-B3" evidence="1">
    <location>
        <begin position="169"/>
        <end position="267"/>
    </location>
</feature>
<feature type="region of interest" description="Disordered" evidence="2">
    <location>
        <begin position="80"/>
        <end position="110"/>
    </location>
</feature>
<feature type="compositionally biased region" description="Polar residues" evidence="2">
    <location>
        <begin position="84"/>
        <end position="99"/>
    </location>
</feature>
<keyword id="KW-0238">DNA-binding</keyword>
<keyword id="KW-0539">Nucleus</keyword>
<keyword id="KW-1185">Reference proteome</keyword>
<keyword id="KW-0804">Transcription</keyword>
<keyword id="KW-0805">Transcription regulation</keyword>
<proteinExistence type="evidence at protein level"/>
<comment type="interaction">
    <interactant intactId="EBI-15392261">
        <id>Q8RV83</id>
    </interactant>
    <interactant intactId="EBI-632243">
        <id>P93830</id>
        <label>IAA17</label>
    </interactant>
    <organismsDiffer>false</organismsDiffer>
    <experiments>3</experiments>
</comment>
<comment type="interaction">
    <interactant intactId="EBI-15392261">
        <id>Q8RV83</id>
    </interactant>
    <interactant intactId="EBI-541115">
        <id>Q9FNZ4</id>
        <label>NIMIN-3</label>
    </interactant>
    <organismsDiffer>false</organismsDiffer>
    <experiments>4</experiments>
</comment>
<comment type="subcellular location">
    <subcellularLocation>
        <location evidence="1">Nucleus</location>
    </subcellularLocation>
</comment>
<protein>
    <recommendedName>
        <fullName>B3 domain-containing protein At2g31720</fullName>
    </recommendedName>
    <alternativeName>
        <fullName>Protein AUXIN RESPONSE FACTOR 70</fullName>
    </alternativeName>
</protein>
<reference key="1">
    <citation type="submission" date="2002-04" db="EMBL/GenBank/DDBJ databases">
        <title>Nucleotide sequence of the putative Arabidopsis ARF70.</title>
        <authorList>
            <person name="Sessa G."/>
            <person name="Carabelli M."/>
            <person name="Ciarbelli A.R."/>
            <person name="Ruzza V."/>
            <person name="Steindler C."/>
            <person name="Ruberti I."/>
        </authorList>
    </citation>
    <scope>NUCLEOTIDE SEQUENCE [MRNA]</scope>
    <source>
        <strain>cv. Columbia</strain>
    </source>
</reference>
<reference key="2">
    <citation type="journal article" date="1999" name="Nature">
        <title>Sequence and analysis of chromosome 2 of the plant Arabidopsis thaliana.</title>
        <authorList>
            <person name="Lin X."/>
            <person name="Kaul S."/>
            <person name="Rounsley S.D."/>
            <person name="Shea T.P."/>
            <person name="Benito M.-I."/>
            <person name="Town C.D."/>
            <person name="Fujii C.Y."/>
            <person name="Mason T.M."/>
            <person name="Bowman C.L."/>
            <person name="Barnstead M.E."/>
            <person name="Feldblyum T.V."/>
            <person name="Buell C.R."/>
            <person name="Ketchum K.A."/>
            <person name="Lee J.J."/>
            <person name="Ronning C.M."/>
            <person name="Koo H.L."/>
            <person name="Moffat K.S."/>
            <person name="Cronin L.A."/>
            <person name="Shen M."/>
            <person name="Pai G."/>
            <person name="Van Aken S."/>
            <person name="Umayam L."/>
            <person name="Tallon L.J."/>
            <person name="Gill J.E."/>
            <person name="Adams M.D."/>
            <person name="Carrera A.J."/>
            <person name="Creasy T.H."/>
            <person name="Goodman H.M."/>
            <person name="Somerville C.R."/>
            <person name="Copenhaver G.P."/>
            <person name="Preuss D."/>
            <person name="Nierman W.C."/>
            <person name="White O."/>
            <person name="Eisen J.A."/>
            <person name="Salzberg S.L."/>
            <person name="Fraser C.M."/>
            <person name="Venter J.C."/>
        </authorList>
    </citation>
    <scope>NUCLEOTIDE SEQUENCE [LARGE SCALE GENOMIC DNA]</scope>
    <source>
        <strain>cv. Columbia</strain>
    </source>
</reference>
<reference key="3">
    <citation type="journal article" date="2017" name="Plant J.">
        <title>Araport11: a complete reannotation of the Arabidopsis thaliana reference genome.</title>
        <authorList>
            <person name="Cheng C.Y."/>
            <person name="Krishnakumar V."/>
            <person name="Chan A.P."/>
            <person name="Thibaud-Nissen F."/>
            <person name="Schobel S."/>
            <person name="Town C.D."/>
        </authorList>
    </citation>
    <scope>GENOME REANNOTATION</scope>
    <source>
        <strain>cv. Columbia</strain>
    </source>
</reference>
<reference key="4">
    <citation type="submission" date="2006-07" db="EMBL/GenBank/DDBJ databases">
        <title>Arabidopsis ORF clones.</title>
        <authorList>
            <person name="Quinitio C."/>
            <person name="Chen H."/>
            <person name="Kim C.J."/>
            <person name="Shinn P."/>
            <person name="Ecker J.R."/>
        </authorList>
    </citation>
    <scope>NUCLEOTIDE SEQUENCE [LARGE SCALE MRNA]</scope>
    <source>
        <strain>cv. Columbia</strain>
    </source>
</reference>
<reference key="5">
    <citation type="submission" date="2009-03" db="EMBL/GenBank/DDBJ databases">
        <title>ORF cloning and analysis of Arabidopsis transcription factor genes.</title>
        <authorList>
            <person name="Fujita M."/>
            <person name="Mizukado S."/>
            <person name="Seki M."/>
            <person name="Shinozaki K."/>
            <person name="Mitsuda N."/>
            <person name="Takiguchi Y."/>
            <person name="Takagi M."/>
        </authorList>
    </citation>
    <scope>NUCLEOTIDE SEQUENCE [LARGE SCALE GENOMIC DNA]</scope>
</reference>
<reference key="6">
    <citation type="journal article" date="2008" name="Trends Plant Sci.">
        <title>The plant B3 superfamily.</title>
        <authorList>
            <person name="Swaminathan K."/>
            <person name="Peterson K."/>
            <person name="Jack T."/>
        </authorList>
    </citation>
    <scope>GENE FAMILY</scope>
</reference>
<gene>
    <name type="primary">ARF70</name>
    <name type="ordered locus">At2g31720</name>
    <name type="ORF">T9H9.24</name>
</gene>